<dbReference type="EMBL" id="Z46240">
    <property type="protein sequence ID" value="CAA86311.1"/>
    <property type="molecule type" value="Genomic_DNA"/>
</dbReference>
<dbReference type="PIR" id="T18684">
    <property type="entry name" value="T18684"/>
</dbReference>
<dbReference type="RefSeq" id="NP_509586.1">
    <property type="nucleotide sequence ID" value="NM_077185.2"/>
</dbReference>
<dbReference type="SMR" id="P41941"/>
<dbReference type="BioGRID" id="46757">
    <property type="interactions" value="6"/>
</dbReference>
<dbReference type="DIP" id="DIP-26036N"/>
<dbReference type="FunCoup" id="P41941">
    <property type="interactions" value="3301"/>
</dbReference>
<dbReference type="IntAct" id="P41941">
    <property type="interactions" value="4"/>
</dbReference>
<dbReference type="STRING" id="6239.B0272.2.1"/>
<dbReference type="PaxDb" id="6239-B0272.2"/>
<dbReference type="PeptideAtlas" id="P41941"/>
<dbReference type="EnsemblMetazoa" id="B0272.2.1">
    <property type="protein sequence ID" value="B0272.2.1"/>
    <property type="gene ID" value="WBGene00007128"/>
</dbReference>
<dbReference type="GeneID" id="181891"/>
<dbReference type="KEGG" id="cel:CELE_B0272.2"/>
<dbReference type="AGR" id="WB:WBGene00007128"/>
<dbReference type="CTD" id="181891"/>
<dbReference type="WormBase" id="B0272.2">
    <property type="protein sequence ID" value="CE00851"/>
    <property type="gene ID" value="WBGene00007128"/>
    <property type="gene designation" value="memb-1"/>
</dbReference>
<dbReference type="eggNOG" id="KOG3251">
    <property type="taxonomic scope" value="Eukaryota"/>
</dbReference>
<dbReference type="GeneTree" id="ENSGT01130000281707"/>
<dbReference type="HOGENOM" id="CLU_083740_0_0_1"/>
<dbReference type="InParanoid" id="P41941"/>
<dbReference type="OMA" id="LKYDSRH"/>
<dbReference type="OrthoDB" id="158360at2759"/>
<dbReference type="PhylomeDB" id="P41941"/>
<dbReference type="Reactome" id="R-CEL-204005">
    <property type="pathway name" value="COPII-mediated vesicle transport"/>
</dbReference>
<dbReference type="Reactome" id="R-CEL-5694530">
    <property type="pathway name" value="Cargo concentration in the ER"/>
</dbReference>
<dbReference type="Reactome" id="R-CEL-6807878">
    <property type="pathway name" value="COPI-mediated anterograde transport"/>
</dbReference>
<dbReference type="Reactome" id="R-CEL-6811438">
    <property type="pathway name" value="Intra-Golgi traffic"/>
</dbReference>
<dbReference type="PRO" id="PR:P41941"/>
<dbReference type="Proteomes" id="UP000001940">
    <property type="component" value="Chromosome X"/>
</dbReference>
<dbReference type="Bgee" id="WBGene00007128">
    <property type="expression patterns" value="Expressed in embryo and 3 other cell types or tissues"/>
</dbReference>
<dbReference type="GO" id="GO:0005789">
    <property type="term" value="C:endoplasmic reticulum membrane"/>
    <property type="evidence" value="ECO:0000318"/>
    <property type="project" value="GO_Central"/>
</dbReference>
<dbReference type="GO" id="GO:0012507">
    <property type="term" value="C:ER to Golgi transport vesicle membrane"/>
    <property type="evidence" value="ECO:0000318"/>
    <property type="project" value="GO_Central"/>
</dbReference>
<dbReference type="GO" id="GO:0005794">
    <property type="term" value="C:Golgi apparatus"/>
    <property type="evidence" value="ECO:0000318"/>
    <property type="project" value="GO_Central"/>
</dbReference>
<dbReference type="GO" id="GO:0000139">
    <property type="term" value="C:Golgi membrane"/>
    <property type="evidence" value="ECO:0007669"/>
    <property type="project" value="UniProtKB-SubCell"/>
</dbReference>
<dbReference type="GO" id="GO:0031902">
    <property type="term" value="C:late endosome membrane"/>
    <property type="evidence" value="ECO:0000318"/>
    <property type="project" value="GO_Central"/>
</dbReference>
<dbReference type="GO" id="GO:0031201">
    <property type="term" value="C:SNARE complex"/>
    <property type="evidence" value="ECO:0000318"/>
    <property type="project" value="GO_Central"/>
</dbReference>
<dbReference type="GO" id="GO:0005484">
    <property type="term" value="F:SNAP receptor activity"/>
    <property type="evidence" value="ECO:0000318"/>
    <property type="project" value="GO_Central"/>
</dbReference>
<dbReference type="GO" id="GO:0000149">
    <property type="term" value="F:SNARE binding"/>
    <property type="evidence" value="ECO:0000318"/>
    <property type="project" value="GO_Central"/>
</dbReference>
<dbReference type="GO" id="GO:0015031">
    <property type="term" value="P:protein transport"/>
    <property type="evidence" value="ECO:0007669"/>
    <property type="project" value="UniProtKB-KW"/>
</dbReference>
<dbReference type="GO" id="GO:0006906">
    <property type="term" value="P:vesicle fusion"/>
    <property type="evidence" value="ECO:0000318"/>
    <property type="project" value="GO_Central"/>
</dbReference>
<dbReference type="CDD" id="cd15863">
    <property type="entry name" value="SNARE_GS27"/>
    <property type="match status" value="1"/>
</dbReference>
<dbReference type="Gene3D" id="1.20.5.110">
    <property type="match status" value="1"/>
</dbReference>
<dbReference type="InterPro" id="IPR027027">
    <property type="entry name" value="GOSR2/Membrin/Bos1"/>
</dbReference>
<dbReference type="PANTHER" id="PTHR21230:SF1">
    <property type="entry name" value="GOLGI SNAP RECEPTOR COMPLEX MEMBER 2"/>
    <property type="match status" value="1"/>
</dbReference>
<dbReference type="PANTHER" id="PTHR21230">
    <property type="entry name" value="VESICLE TRANSPORT V-SNARE PROTEIN VTI1-RELATED"/>
    <property type="match status" value="1"/>
</dbReference>
<dbReference type="Pfam" id="PF12352">
    <property type="entry name" value="V-SNARE_C"/>
    <property type="match status" value="1"/>
</dbReference>
<dbReference type="PIRSF" id="PIRSF028865">
    <property type="entry name" value="Membrin-2"/>
    <property type="match status" value="1"/>
</dbReference>
<dbReference type="SUPFAM" id="SSF58038">
    <property type="entry name" value="SNARE fusion complex"/>
    <property type="match status" value="1"/>
</dbReference>
<name>GOSR2_CAEEL</name>
<proteinExistence type="inferred from homology"/>
<protein>
    <recommendedName>
        <fullName evidence="3">Golgi SNAP receptor complex member 2 homolog memb-1</fullName>
    </recommendedName>
</protein>
<comment type="function">
    <text evidence="1">Involved in transport of proteins from the cis/medial-Golgi to the trans-Golgi network.</text>
</comment>
<comment type="subunit">
    <text evidence="1">Part of a unique SNARE complex.</text>
</comment>
<comment type="subcellular location">
    <subcellularLocation>
        <location evidence="1">Golgi apparatus</location>
        <location evidence="1">cis-Golgi network membrane</location>
        <topology evidence="2">Single-pass type IV membrane protein</topology>
    </subcellularLocation>
    <subcellularLocation>
        <location evidence="1">Golgi apparatus membrane</location>
    </subcellularLocation>
    <subcellularLocation>
        <location evidence="1">Endoplasmic reticulum membrane</location>
    </subcellularLocation>
    <text evidence="1">Concentrated most in the intermediate compartment/cis-Golgi network and the cis-Golgi cisternae 1 and 2. Greatly reduced in concentration at the trans end of the Golgi apparatus.</text>
</comment>
<comment type="similarity">
    <text evidence="3">Belongs to the GOSR2 family.</text>
</comment>
<evidence type="ECO:0000250" key="1">
    <source>
        <dbReference type="UniProtKB" id="O35165"/>
    </source>
</evidence>
<evidence type="ECO:0000255" key="2"/>
<evidence type="ECO:0000305" key="3"/>
<evidence type="ECO:0000312" key="4">
    <source>
        <dbReference type="WormBase" id="B0272.2"/>
    </source>
</evidence>
<organism>
    <name type="scientific">Caenorhabditis elegans</name>
    <dbReference type="NCBI Taxonomy" id="6239"/>
    <lineage>
        <taxon>Eukaryota</taxon>
        <taxon>Metazoa</taxon>
        <taxon>Ecdysozoa</taxon>
        <taxon>Nematoda</taxon>
        <taxon>Chromadorea</taxon>
        <taxon>Rhabditida</taxon>
        <taxon>Rhabditina</taxon>
        <taxon>Rhabditomorpha</taxon>
        <taxon>Rhabditoidea</taxon>
        <taxon>Rhabditidae</taxon>
        <taxon>Peloderinae</taxon>
        <taxon>Caenorhabditis</taxon>
    </lineage>
</organism>
<sequence length="213" mass="24650">MEALYQSTNFLLQKVQHDLGRLEGTQNEQDAQVVVQCIYGDVITLKENCQTLDNYVSREPPARRQAARMRVDQLRADVHRVDMAVSAVHTRMTQRWRAATERDELLRTRYRPNDTALSIGDHELLLNDRLQSSHTHLDDLISQGSAVLENLKSQHLNLRGVGRKMHEIGQALGLSNSTLQVIDRRVREDWILFVIGCIVCCIFMYAFYRFWRG</sequence>
<keyword id="KW-0256">Endoplasmic reticulum</keyword>
<keyword id="KW-0333">Golgi apparatus</keyword>
<keyword id="KW-0472">Membrane</keyword>
<keyword id="KW-0653">Protein transport</keyword>
<keyword id="KW-1185">Reference proteome</keyword>
<keyword id="KW-0812">Transmembrane</keyword>
<keyword id="KW-1133">Transmembrane helix</keyword>
<keyword id="KW-0813">Transport</keyword>
<feature type="chain" id="PRO_0000212552" description="Golgi SNAP receptor complex member 2 homolog memb-1" evidence="3">
    <location>
        <begin position="1"/>
        <end position="213"/>
    </location>
</feature>
<feature type="topological domain" description="Cytoplasmic" evidence="2">
    <location>
        <begin position="1"/>
        <end position="189"/>
    </location>
</feature>
<feature type="transmembrane region" description="Helical; Anchor for type IV membrane protein" evidence="2">
    <location>
        <begin position="190"/>
        <end position="210"/>
    </location>
</feature>
<feature type="topological domain" description="Vesicular" evidence="2">
    <location>
        <begin position="211"/>
        <end position="213"/>
    </location>
</feature>
<reference key="1">
    <citation type="journal article" date="1998" name="Science">
        <title>Genome sequence of the nematode C. elegans: a platform for investigating biology.</title>
        <authorList>
            <consortium name="The C. elegans sequencing consortium"/>
        </authorList>
    </citation>
    <scope>NUCLEOTIDE SEQUENCE [LARGE SCALE GENOMIC DNA]</scope>
    <source>
        <strain>Bristol N2</strain>
    </source>
</reference>
<gene>
    <name evidence="4" type="primary">memb-1</name>
    <name evidence="4" type="synonym">gosr-2.1</name>
    <name type="ORF">B0272.2</name>
</gene>
<accession>P41941</accession>